<comment type="function">
    <text evidence="1">Specifically methylates the cytosine at position 967 (m5C967) of 16S rRNA.</text>
</comment>
<comment type="catalytic activity">
    <reaction evidence="1">
        <text>cytidine(967) in 16S rRNA + S-adenosyl-L-methionine = 5-methylcytidine(967) in 16S rRNA + S-adenosyl-L-homocysteine + H(+)</text>
        <dbReference type="Rhea" id="RHEA:42748"/>
        <dbReference type="Rhea" id="RHEA-COMP:10219"/>
        <dbReference type="Rhea" id="RHEA-COMP:10220"/>
        <dbReference type="ChEBI" id="CHEBI:15378"/>
        <dbReference type="ChEBI" id="CHEBI:57856"/>
        <dbReference type="ChEBI" id="CHEBI:59789"/>
        <dbReference type="ChEBI" id="CHEBI:74483"/>
        <dbReference type="ChEBI" id="CHEBI:82748"/>
        <dbReference type="EC" id="2.1.1.176"/>
    </reaction>
</comment>
<comment type="subcellular location">
    <subcellularLocation>
        <location evidence="1">Cytoplasm</location>
    </subcellularLocation>
</comment>
<comment type="similarity">
    <text evidence="1">Belongs to the class I-like SAM-binding methyltransferase superfamily. RsmB/NOP family.</text>
</comment>
<keyword id="KW-0963">Cytoplasm</keyword>
<keyword id="KW-0489">Methyltransferase</keyword>
<keyword id="KW-0694">RNA-binding</keyword>
<keyword id="KW-0698">rRNA processing</keyword>
<keyword id="KW-0949">S-adenosyl-L-methionine</keyword>
<keyword id="KW-0808">Transferase</keyword>
<dbReference type="EC" id="2.1.1.176" evidence="1"/>
<dbReference type="EMBL" id="CP000036">
    <property type="protein sequence ID" value="ABB67770.1"/>
    <property type="molecule type" value="Genomic_DNA"/>
</dbReference>
<dbReference type="RefSeq" id="WP_000744784.1">
    <property type="nucleotide sequence ID" value="NC_007613.1"/>
</dbReference>
<dbReference type="SMR" id="Q31VY8"/>
<dbReference type="KEGG" id="sbo:SBO_3282"/>
<dbReference type="HOGENOM" id="CLU_005316_0_4_6"/>
<dbReference type="Proteomes" id="UP000007067">
    <property type="component" value="Chromosome"/>
</dbReference>
<dbReference type="GO" id="GO:0005829">
    <property type="term" value="C:cytosol"/>
    <property type="evidence" value="ECO:0007669"/>
    <property type="project" value="TreeGrafter"/>
</dbReference>
<dbReference type="GO" id="GO:0003723">
    <property type="term" value="F:RNA binding"/>
    <property type="evidence" value="ECO:0007669"/>
    <property type="project" value="UniProtKB-KW"/>
</dbReference>
<dbReference type="GO" id="GO:0009383">
    <property type="term" value="F:rRNA (cytosine-C5-)-methyltransferase activity"/>
    <property type="evidence" value="ECO:0007669"/>
    <property type="project" value="TreeGrafter"/>
</dbReference>
<dbReference type="GO" id="GO:0006355">
    <property type="term" value="P:regulation of DNA-templated transcription"/>
    <property type="evidence" value="ECO:0007669"/>
    <property type="project" value="InterPro"/>
</dbReference>
<dbReference type="GO" id="GO:0070475">
    <property type="term" value="P:rRNA base methylation"/>
    <property type="evidence" value="ECO:0007669"/>
    <property type="project" value="TreeGrafter"/>
</dbReference>
<dbReference type="CDD" id="cd02440">
    <property type="entry name" value="AdoMet_MTases"/>
    <property type="match status" value="1"/>
</dbReference>
<dbReference type="CDD" id="cd00620">
    <property type="entry name" value="Methyltransferase_Sun"/>
    <property type="match status" value="1"/>
</dbReference>
<dbReference type="FunFam" id="1.10.287.730:FF:000001">
    <property type="entry name" value="Ribosomal RNA small subunit methyltransferase B"/>
    <property type="match status" value="1"/>
</dbReference>
<dbReference type="FunFam" id="1.10.940.10:FF:000002">
    <property type="entry name" value="Ribosomal RNA small subunit methyltransferase B"/>
    <property type="match status" value="1"/>
</dbReference>
<dbReference type="FunFam" id="3.30.70.1170:FF:000002">
    <property type="entry name" value="Ribosomal RNA small subunit methyltransferase B"/>
    <property type="match status" value="1"/>
</dbReference>
<dbReference type="FunFam" id="3.40.50.150:FF:000022">
    <property type="entry name" value="Ribosomal RNA small subunit methyltransferase B"/>
    <property type="match status" value="1"/>
</dbReference>
<dbReference type="Gene3D" id="1.10.287.730">
    <property type="entry name" value="Helix hairpin bin"/>
    <property type="match status" value="1"/>
</dbReference>
<dbReference type="Gene3D" id="1.10.940.10">
    <property type="entry name" value="NusB-like"/>
    <property type="match status" value="1"/>
</dbReference>
<dbReference type="Gene3D" id="3.30.70.1170">
    <property type="entry name" value="Sun protein, domain 3"/>
    <property type="match status" value="1"/>
</dbReference>
<dbReference type="Gene3D" id="3.40.50.150">
    <property type="entry name" value="Vaccinia Virus protein VP39"/>
    <property type="match status" value="1"/>
</dbReference>
<dbReference type="HAMAP" id="MF_01856">
    <property type="entry name" value="16SrRNA_methyltr_B"/>
    <property type="match status" value="1"/>
</dbReference>
<dbReference type="InterPro" id="IPR049560">
    <property type="entry name" value="MeTrfase_RsmB-F_NOP2_cat"/>
</dbReference>
<dbReference type="InterPro" id="IPR001678">
    <property type="entry name" value="MeTrfase_RsmB-F_NOP2_dom"/>
</dbReference>
<dbReference type="InterPro" id="IPR035926">
    <property type="entry name" value="NusB-like_sf"/>
</dbReference>
<dbReference type="InterPro" id="IPR006027">
    <property type="entry name" value="NusB_RsmB_TIM44"/>
</dbReference>
<dbReference type="InterPro" id="IPR023267">
    <property type="entry name" value="RCMT"/>
</dbReference>
<dbReference type="InterPro" id="IPR004573">
    <property type="entry name" value="rRNA_ssu_MeTfrase_B"/>
</dbReference>
<dbReference type="InterPro" id="IPR023541">
    <property type="entry name" value="rRNA_ssu_MeTfrase_B_ent"/>
</dbReference>
<dbReference type="InterPro" id="IPR054728">
    <property type="entry name" value="RsmB-like_ferredoxin"/>
</dbReference>
<dbReference type="InterPro" id="IPR048019">
    <property type="entry name" value="RsmB-like_N"/>
</dbReference>
<dbReference type="InterPro" id="IPR018314">
    <property type="entry name" value="RsmB/NOL1/NOP2-like_CS"/>
</dbReference>
<dbReference type="InterPro" id="IPR029063">
    <property type="entry name" value="SAM-dependent_MTases_sf"/>
</dbReference>
<dbReference type="NCBIfam" id="NF008149">
    <property type="entry name" value="PRK10901.1"/>
    <property type="match status" value="1"/>
</dbReference>
<dbReference type="NCBIfam" id="NF011494">
    <property type="entry name" value="PRK14902.1"/>
    <property type="match status" value="1"/>
</dbReference>
<dbReference type="NCBIfam" id="TIGR00563">
    <property type="entry name" value="rsmB"/>
    <property type="match status" value="1"/>
</dbReference>
<dbReference type="PANTHER" id="PTHR22807:SF61">
    <property type="entry name" value="NOL1_NOP2_SUN FAMILY PROTEIN _ ANTITERMINATION NUSB DOMAIN-CONTAINING PROTEIN"/>
    <property type="match status" value="1"/>
</dbReference>
<dbReference type="PANTHER" id="PTHR22807">
    <property type="entry name" value="NOP2 YEAST -RELATED NOL1/NOP2/FMU SUN DOMAIN-CONTAINING"/>
    <property type="match status" value="1"/>
</dbReference>
<dbReference type="Pfam" id="PF01189">
    <property type="entry name" value="Methyltr_RsmB-F"/>
    <property type="match status" value="1"/>
</dbReference>
<dbReference type="Pfam" id="PF01029">
    <property type="entry name" value="NusB"/>
    <property type="match status" value="1"/>
</dbReference>
<dbReference type="Pfam" id="PF22458">
    <property type="entry name" value="RsmF-B_ferredox"/>
    <property type="match status" value="1"/>
</dbReference>
<dbReference type="PRINTS" id="PR02008">
    <property type="entry name" value="RCMTFAMILY"/>
</dbReference>
<dbReference type="SUPFAM" id="SSF48013">
    <property type="entry name" value="NusB-like"/>
    <property type="match status" value="1"/>
</dbReference>
<dbReference type="SUPFAM" id="SSF53335">
    <property type="entry name" value="S-adenosyl-L-methionine-dependent methyltransferases"/>
    <property type="match status" value="1"/>
</dbReference>
<dbReference type="PROSITE" id="PS01153">
    <property type="entry name" value="NOL1_NOP2_SUN"/>
    <property type="match status" value="1"/>
</dbReference>
<dbReference type="PROSITE" id="PS51686">
    <property type="entry name" value="SAM_MT_RSMB_NOP"/>
    <property type="match status" value="1"/>
</dbReference>
<protein>
    <recommendedName>
        <fullName evidence="1">Ribosomal RNA small subunit methyltransferase B</fullName>
        <ecNumber evidence="1">2.1.1.176</ecNumber>
    </recommendedName>
    <alternativeName>
        <fullName evidence="1">16S rRNA m5C967 methyltransferase</fullName>
    </alternativeName>
    <alternativeName>
        <fullName evidence="1">rRNA (cytosine-C(5)-)-methyltransferase RsmB</fullName>
    </alternativeName>
</protein>
<proteinExistence type="inferred from homology"/>
<gene>
    <name evidence="1" type="primary">rsmB</name>
    <name evidence="1" type="synonym">sun</name>
    <name type="ordered locus">SBO_3282</name>
</gene>
<accession>Q31VY8</accession>
<name>RSMB_SHIBS</name>
<organism>
    <name type="scientific">Shigella boydii serotype 4 (strain Sb227)</name>
    <dbReference type="NCBI Taxonomy" id="300268"/>
    <lineage>
        <taxon>Bacteria</taxon>
        <taxon>Pseudomonadati</taxon>
        <taxon>Pseudomonadota</taxon>
        <taxon>Gammaproteobacteria</taxon>
        <taxon>Enterobacterales</taxon>
        <taxon>Enterobacteriaceae</taxon>
        <taxon>Shigella</taxon>
    </lineage>
</organism>
<reference key="1">
    <citation type="journal article" date="2005" name="Nucleic Acids Res.">
        <title>Genome dynamics and diversity of Shigella species, the etiologic agents of bacillary dysentery.</title>
        <authorList>
            <person name="Yang F."/>
            <person name="Yang J."/>
            <person name="Zhang X."/>
            <person name="Chen L."/>
            <person name="Jiang Y."/>
            <person name="Yan Y."/>
            <person name="Tang X."/>
            <person name="Wang J."/>
            <person name="Xiong Z."/>
            <person name="Dong J."/>
            <person name="Xue Y."/>
            <person name="Zhu Y."/>
            <person name="Xu X."/>
            <person name="Sun L."/>
            <person name="Chen S."/>
            <person name="Nie H."/>
            <person name="Peng J."/>
            <person name="Xu J."/>
            <person name="Wang Y."/>
            <person name="Yuan Z."/>
            <person name="Wen Y."/>
            <person name="Yao Z."/>
            <person name="Shen Y."/>
            <person name="Qiang B."/>
            <person name="Hou Y."/>
            <person name="Yu J."/>
            <person name="Jin Q."/>
        </authorList>
    </citation>
    <scope>NUCLEOTIDE SEQUENCE [LARGE SCALE GENOMIC DNA]</scope>
    <source>
        <strain>Sb227</strain>
    </source>
</reference>
<feature type="chain" id="PRO_0000366177" description="Ribosomal RNA small subunit methyltransferase B">
    <location>
        <begin position="1"/>
        <end position="429"/>
    </location>
</feature>
<feature type="active site" description="Nucleophile" evidence="1">
    <location>
        <position position="375"/>
    </location>
</feature>
<feature type="binding site" evidence="1">
    <location>
        <begin position="254"/>
        <end position="260"/>
    </location>
    <ligand>
        <name>S-adenosyl-L-methionine</name>
        <dbReference type="ChEBI" id="CHEBI:59789"/>
    </ligand>
</feature>
<feature type="binding site" evidence="1">
    <location>
        <position position="277"/>
    </location>
    <ligand>
        <name>S-adenosyl-L-methionine</name>
        <dbReference type="ChEBI" id="CHEBI:59789"/>
    </ligand>
</feature>
<feature type="binding site" evidence="1">
    <location>
        <position position="303"/>
    </location>
    <ligand>
        <name>S-adenosyl-L-methionine</name>
        <dbReference type="ChEBI" id="CHEBI:59789"/>
    </ligand>
</feature>
<feature type="binding site" evidence="1">
    <location>
        <position position="322"/>
    </location>
    <ligand>
        <name>S-adenosyl-L-methionine</name>
        <dbReference type="ChEBI" id="CHEBI:59789"/>
    </ligand>
</feature>
<sequence>MKKQRNLRSMAAQAVEQVVEQGQSLSNILPPLQQKVSDKDKALLQELCFGVLRTLSQLDWLINKLMARPMTGKQRTVHYLIMVGLYQLLYTRIPPHAALAETVEGAIAIKRPQLKGLINGVLRQFQRQQEELLAKFNASDARYLHPSWLLKRLQKAYPEQWQSIVEANNQRPPMWLRVNRTHHSRDSWLALLDEAGMKGFPHADYPDAVRLETPAPVHALPGFEDGWVTVQDASAQGCMTWLAPQNGEHILDLCAAPGGKTTHILEVAPEAQVVAVDIDEQRLSRVYDNLKRLGMKATVKQGDGRYPSQWCGEQQFDRILLDAPCSATGVIRRHPDIKWLRRDRDIPELAQLQSEILDAIWPHLKSGGTLVYATCSVLPEENSLQIKAFLQRTADAELCETGTPEQPGKQNLPGAEEGDGFFYAKLIKK</sequence>
<evidence type="ECO:0000255" key="1">
    <source>
        <dbReference type="HAMAP-Rule" id="MF_01856"/>
    </source>
</evidence>